<organism>
    <name type="scientific">Rickettsia conorii (strain ATCC VR-613 / Malish 7)</name>
    <dbReference type="NCBI Taxonomy" id="272944"/>
    <lineage>
        <taxon>Bacteria</taxon>
        <taxon>Pseudomonadati</taxon>
        <taxon>Pseudomonadota</taxon>
        <taxon>Alphaproteobacteria</taxon>
        <taxon>Rickettsiales</taxon>
        <taxon>Rickettsiaceae</taxon>
        <taxon>Rickettsieae</taxon>
        <taxon>Rickettsia</taxon>
        <taxon>spotted fever group</taxon>
    </lineage>
</organism>
<name>SYFB_RICCN</name>
<protein>
    <recommendedName>
        <fullName evidence="1">Phenylalanine--tRNA ligase beta subunit</fullName>
        <ecNumber evidence="1">6.1.1.20</ecNumber>
    </recommendedName>
    <alternativeName>
        <fullName evidence="1">Phenylalanyl-tRNA synthetase beta subunit</fullName>
        <shortName evidence="1">PheRS</shortName>
    </alternativeName>
</protein>
<accession>Q92I38</accession>
<dbReference type="EC" id="6.1.1.20" evidence="1"/>
<dbReference type="EMBL" id="AE006914">
    <property type="protein sequence ID" value="AAL03120.1"/>
    <property type="molecule type" value="Genomic_DNA"/>
</dbReference>
<dbReference type="PIR" id="F97772">
    <property type="entry name" value="F97772"/>
</dbReference>
<dbReference type="RefSeq" id="WP_010977216.1">
    <property type="nucleotide sequence ID" value="NC_003103.1"/>
</dbReference>
<dbReference type="SMR" id="Q92I38"/>
<dbReference type="GeneID" id="927685"/>
<dbReference type="KEGG" id="rco:RC0582"/>
<dbReference type="PATRIC" id="fig|272944.4.peg.664"/>
<dbReference type="HOGENOM" id="CLU_016891_0_0_5"/>
<dbReference type="Proteomes" id="UP000000816">
    <property type="component" value="Chromosome"/>
</dbReference>
<dbReference type="GO" id="GO:0009328">
    <property type="term" value="C:phenylalanine-tRNA ligase complex"/>
    <property type="evidence" value="ECO:0007669"/>
    <property type="project" value="TreeGrafter"/>
</dbReference>
<dbReference type="GO" id="GO:0005524">
    <property type="term" value="F:ATP binding"/>
    <property type="evidence" value="ECO:0007669"/>
    <property type="project" value="UniProtKB-UniRule"/>
</dbReference>
<dbReference type="GO" id="GO:0000287">
    <property type="term" value="F:magnesium ion binding"/>
    <property type="evidence" value="ECO:0007669"/>
    <property type="project" value="UniProtKB-UniRule"/>
</dbReference>
<dbReference type="GO" id="GO:0004826">
    <property type="term" value="F:phenylalanine-tRNA ligase activity"/>
    <property type="evidence" value="ECO:0007669"/>
    <property type="project" value="UniProtKB-UniRule"/>
</dbReference>
<dbReference type="GO" id="GO:0000049">
    <property type="term" value="F:tRNA binding"/>
    <property type="evidence" value="ECO:0007669"/>
    <property type="project" value="UniProtKB-KW"/>
</dbReference>
<dbReference type="GO" id="GO:0006432">
    <property type="term" value="P:phenylalanyl-tRNA aminoacylation"/>
    <property type="evidence" value="ECO:0007669"/>
    <property type="project" value="UniProtKB-UniRule"/>
</dbReference>
<dbReference type="CDD" id="cd00769">
    <property type="entry name" value="PheRS_beta_core"/>
    <property type="match status" value="1"/>
</dbReference>
<dbReference type="CDD" id="cd02796">
    <property type="entry name" value="tRNA_bind_bactPheRS"/>
    <property type="match status" value="1"/>
</dbReference>
<dbReference type="FunFam" id="2.40.50.140:FF:000045">
    <property type="entry name" value="Phenylalanine--tRNA ligase beta subunit"/>
    <property type="match status" value="1"/>
</dbReference>
<dbReference type="Gene3D" id="3.30.56.10">
    <property type="match status" value="2"/>
</dbReference>
<dbReference type="Gene3D" id="3.30.930.10">
    <property type="entry name" value="Bira Bifunctional Protein, Domain 2"/>
    <property type="match status" value="1"/>
</dbReference>
<dbReference type="Gene3D" id="3.30.70.380">
    <property type="entry name" value="Ferrodoxin-fold anticodon-binding domain"/>
    <property type="match status" value="1"/>
</dbReference>
<dbReference type="Gene3D" id="2.40.50.140">
    <property type="entry name" value="Nucleic acid-binding proteins"/>
    <property type="match status" value="1"/>
</dbReference>
<dbReference type="Gene3D" id="3.50.40.10">
    <property type="entry name" value="Phenylalanyl-trna Synthetase, Chain B, domain 3"/>
    <property type="match status" value="1"/>
</dbReference>
<dbReference type="HAMAP" id="MF_00283">
    <property type="entry name" value="Phe_tRNA_synth_beta1"/>
    <property type="match status" value="1"/>
</dbReference>
<dbReference type="InterPro" id="IPR045864">
    <property type="entry name" value="aa-tRNA-synth_II/BPL/LPL"/>
</dbReference>
<dbReference type="InterPro" id="IPR005146">
    <property type="entry name" value="B3/B4_tRNA-bd"/>
</dbReference>
<dbReference type="InterPro" id="IPR009061">
    <property type="entry name" value="DNA-bd_dom_put_sf"/>
</dbReference>
<dbReference type="InterPro" id="IPR005121">
    <property type="entry name" value="Fdx_antiC-bd"/>
</dbReference>
<dbReference type="InterPro" id="IPR036690">
    <property type="entry name" value="Fdx_antiC-bd_sf"/>
</dbReference>
<dbReference type="InterPro" id="IPR012340">
    <property type="entry name" value="NA-bd_OB-fold"/>
</dbReference>
<dbReference type="InterPro" id="IPR045060">
    <property type="entry name" value="Phe-tRNA-ligase_IIc_bsu"/>
</dbReference>
<dbReference type="InterPro" id="IPR004532">
    <property type="entry name" value="Phe-tRNA-ligase_IIc_bsu_bact"/>
</dbReference>
<dbReference type="InterPro" id="IPR020825">
    <property type="entry name" value="Phe-tRNA_synthase-like_B3/B4"/>
</dbReference>
<dbReference type="InterPro" id="IPR041616">
    <property type="entry name" value="PheRS_beta_core"/>
</dbReference>
<dbReference type="InterPro" id="IPR002547">
    <property type="entry name" value="tRNA-bd_dom"/>
</dbReference>
<dbReference type="InterPro" id="IPR033714">
    <property type="entry name" value="tRNA_bind_bactPheRS"/>
</dbReference>
<dbReference type="InterPro" id="IPR005147">
    <property type="entry name" value="tRNA_synthase_B5-dom"/>
</dbReference>
<dbReference type="NCBIfam" id="TIGR00472">
    <property type="entry name" value="pheT_bact"/>
    <property type="match status" value="1"/>
</dbReference>
<dbReference type="NCBIfam" id="NF045760">
    <property type="entry name" value="YtpR"/>
    <property type="match status" value="1"/>
</dbReference>
<dbReference type="PANTHER" id="PTHR10947:SF0">
    <property type="entry name" value="PHENYLALANINE--TRNA LIGASE BETA SUBUNIT"/>
    <property type="match status" value="1"/>
</dbReference>
<dbReference type="PANTHER" id="PTHR10947">
    <property type="entry name" value="PHENYLALANYL-TRNA SYNTHETASE BETA CHAIN AND LEUCINE-RICH REPEAT-CONTAINING PROTEIN 47"/>
    <property type="match status" value="1"/>
</dbReference>
<dbReference type="Pfam" id="PF03483">
    <property type="entry name" value="B3_4"/>
    <property type="match status" value="1"/>
</dbReference>
<dbReference type="Pfam" id="PF03484">
    <property type="entry name" value="B5"/>
    <property type="match status" value="1"/>
</dbReference>
<dbReference type="Pfam" id="PF03147">
    <property type="entry name" value="FDX-ACB"/>
    <property type="match status" value="1"/>
</dbReference>
<dbReference type="Pfam" id="PF01588">
    <property type="entry name" value="tRNA_bind"/>
    <property type="match status" value="1"/>
</dbReference>
<dbReference type="Pfam" id="PF17759">
    <property type="entry name" value="tRNA_synthFbeta"/>
    <property type="match status" value="1"/>
</dbReference>
<dbReference type="SMART" id="SM00873">
    <property type="entry name" value="B3_4"/>
    <property type="match status" value="1"/>
</dbReference>
<dbReference type="SMART" id="SM00874">
    <property type="entry name" value="B5"/>
    <property type="match status" value="1"/>
</dbReference>
<dbReference type="SMART" id="SM00896">
    <property type="entry name" value="FDX-ACB"/>
    <property type="match status" value="1"/>
</dbReference>
<dbReference type="SUPFAM" id="SSF54991">
    <property type="entry name" value="Anticodon-binding domain of PheRS"/>
    <property type="match status" value="1"/>
</dbReference>
<dbReference type="SUPFAM" id="SSF55681">
    <property type="entry name" value="Class II aaRS and biotin synthetases"/>
    <property type="match status" value="1"/>
</dbReference>
<dbReference type="SUPFAM" id="SSF50249">
    <property type="entry name" value="Nucleic acid-binding proteins"/>
    <property type="match status" value="1"/>
</dbReference>
<dbReference type="SUPFAM" id="SSF56037">
    <property type="entry name" value="PheT/TilS domain"/>
    <property type="match status" value="1"/>
</dbReference>
<dbReference type="SUPFAM" id="SSF46955">
    <property type="entry name" value="Putative DNA-binding domain"/>
    <property type="match status" value="1"/>
</dbReference>
<dbReference type="PROSITE" id="PS51483">
    <property type="entry name" value="B5"/>
    <property type="match status" value="1"/>
</dbReference>
<dbReference type="PROSITE" id="PS51447">
    <property type="entry name" value="FDX_ACB"/>
    <property type="match status" value="1"/>
</dbReference>
<dbReference type="PROSITE" id="PS50886">
    <property type="entry name" value="TRBD"/>
    <property type="match status" value="1"/>
</dbReference>
<proteinExistence type="inferred from homology"/>
<keyword id="KW-0030">Aminoacyl-tRNA synthetase</keyword>
<keyword id="KW-0067">ATP-binding</keyword>
<keyword id="KW-0963">Cytoplasm</keyword>
<keyword id="KW-0436">Ligase</keyword>
<keyword id="KW-0460">Magnesium</keyword>
<keyword id="KW-0479">Metal-binding</keyword>
<keyword id="KW-0547">Nucleotide-binding</keyword>
<keyword id="KW-0648">Protein biosynthesis</keyword>
<keyword id="KW-0694">RNA-binding</keyword>
<keyword id="KW-0820">tRNA-binding</keyword>
<gene>
    <name evidence="1" type="primary">pheT</name>
    <name type="ordered locus">RC0582</name>
</gene>
<feature type="chain" id="PRO_0000126939" description="Phenylalanine--tRNA ligase beta subunit">
    <location>
        <begin position="1"/>
        <end position="818"/>
    </location>
</feature>
<feature type="domain" description="tRNA-binding" evidence="1">
    <location>
        <begin position="39"/>
        <end position="148"/>
    </location>
</feature>
<feature type="domain" description="B5" evidence="1">
    <location>
        <begin position="423"/>
        <end position="498"/>
    </location>
</feature>
<feature type="domain" description="FDX-ACB" evidence="1">
    <location>
        <begin position="724"/>
        <end position="817"/>
    </location>
</feature>
<feature type="binding site" evidence="1">
    <location>
        <position position="476"/>
    </location>
    <ligand>
        <name>Mg(2+)</name>
        <dbReference type="ChEBI" id="CHEBI:18420"/>
        <note>shared with alpha subunit</note>
    </ligand>
</feature>
<feature type="binding site" evidence="1">
    <location>
        <position position="482"/>
    </location>
    <ligand>
        <name>Mg(2+)</name>
        <dbReference type="ChEBI" id="CHEBI:18420"/>
        <note>shared with alpha subunit</note>
    </ligand>
</feature>
<feature type="binding site" evidence="1">
    <location>
        <position position="485"/>
    </location>
    <ligand>
        <name>Mg(2+)</name>
        <dbReference type="ChEBI" id="CHEBI:18420"/>
        <note>shared with alpha subunit</note>
    </ligand>
</feature>
<feature type="binding site" evidence="1">
    <location>
        <position position="486"/>
    </location>
    <ligand>
        <name>Mg(2+)</name>
        <dbReference type="ChEBI" id="CHEBI:18420"/>
        <note>shared with alpha subunit</note>
    </ligand>
</feature>
<reference key="1">
    <citation type="journal article" date="2001" name="Science">
        <title>Mechanisms of evolution in Rickettsia conorii and R. prowazekii.</title>
        <authorList>
            <person name="Ogata H."/>
            <person name="Audic S."/>
            <person name="Renesto-Audiffren P."/>
            <person name="Fournier P.-E."/>
            <person name="Barbe V."/>
            <person name="Samson D."/>
            <person name="Roux V."/>
            <person name="Cossart P."/>
            <person name="Weissenbach J."/>
            <person name="Claverie J.-M."/>
            <person name="Raoult D."/>
        </authorList>
    </citation>
    <scope>NUCLEOTIDE SEQUENCE [LARGE SCALE GENOMIC DNA]</scope>
    <source>
        <strain>ATCC VR-613 / Malish 7</strain>
    </source>
</reference>
<evidence type="ECO:0000255" key="1">
    <source>
        <dbReference type="HAMAP-Rule" id="MF_00283"/>
    </source>
</evidence>
<comment type="catalytic activity">
    <reaction evidence="1">
        <text>tRNA(Phe) + L-phenylalanine + ATP = L-phenylalanyl-tRNA(Phe) + AMP + diphosphate + H(+)</text>
        <dbReference type="Rhea" id="RHEA:19413"/>
        <dbReference type="Rhea" id="RHEA-COMP:9668"/>
        <dbReference type="Rhea" id="RHEA-COMP:9699"/>
        <dbReference type="ChEBI" id="CHEBI:15378"/>
        <dbReference type="ChEBI" id="CHEBI:30616"/>
        <dbReference type="ChEBI" id="CHEBI:33019"/>
        <dbReference type="ChEBI" id="CHEBI:58095"/>
        <dbReference type="ChEBI" id="CHEBI:78442"/>
        <dbReference type="ChEBI" id="CHEBI:78531"/>
        <dbReference type="ChEBI" id="CHEBI:456215"/>
        <dbReference type="EC" id="6.1.1.20"/>
    </reaction>
</comment>
<comment type="cofactor">
    <cofactor evidence="1">
        <name>Mg(2+)</name>
        <dbReference type="ChEBI" id="CHEBI:18420"/>
    </cofactor>
    <text evidence="1">Binds 2 magnesium ions per tetramer.</text>
</comment>
<comment type="subunit">
    <text evidence="1">Tetramer of two alpha and two beta subunits.</text>
</comment>
<comment type="subcellular location">
    <subcellularLocation>
        <location evidence="1">Cytoplasm</location>
    </subcellularLocation>
</comment>
<comment type="similarity">
    <text evidence="1">Belongs to the phenylalanyl-tRNA synthetase beta subunit family. Type 1 subfamily.</text>
</comment>
<sequence>MKFTLSWLKQFLETSASVTEIAEALTAIGLEVEEVIDKAAELQKFEVAYITNIKPHPSADKLKLCDVETKSGMLQIVCGARNARAGIKVVLANIGIEIPNGKFKIKESVIRGEKSCGMLCSEEELLLASESEGIIELSEDAVVGENFTKYYGLDDPIFVINVTPNRGDALGVYGIARDLAAKGIGILKELEISVIKSTFISKMKLNVQDKEACPLFTFREIRNLKNKPSPDWLRKLLKNVGVKTISSLVDVTNYISYSFGQPMHAYDADRIKGGITVARHCEKHSDEAISGQQNEIATAALQPRNDVAKCHALNGKEYLLTENDLVIKDESGIQGLAGVIGEADSSCTDSTTNIILEAACFNAKMVAASGRRFQIDTDARYRNERNIDRNFTEKALDIATNLILSICGNGEVSEVVKVGEKESQKKPLDFSACYLEKITGIKLNIKAIEAILNKLGFITDVKGEIIKVIAPSWRHDITILEDIAEEIARIYGYDKIESIKLPELDQDNNKLREHKRISSFKRILASKGYDEVVTNSFMSSEDAKLFAELKEELFLLNPISIGDNYMRPTILPNLLSIVSKNLARSIKDMAFFEVGPSFIDLNTEATYLTAIISGSYNNKNPHSFGRGYDVFDLKGDLELVADYAGLSIDKCIATNGTALPQYYHPTRAVNIGLGKNLLGHFGQIHPKILKYYDINQEIFAFELNITNLPLIKAKFGKRDEFAVSDFQANFRDYAFIVGQDHRVGEIISYINNFNKKLIKSVILFDIYSGDKLPEGKKSIAVKIELQADDRTLSDTDLNSFSKDLVAAISQKFQGTLRE</sequence>